<name>GARE1_XENLA</name>
<comment type="function">
    <text evidence="1">Adapter protein that may provide a link between cell surface epidermal growth factor receptor and the MAPK/ERK signaling pathway. May promote cell proliferation (By similarity).</text>
</comment>
<comment type="similarity">
    <text evidence="3">Belongs to the GAREM family.</text>
</comment>
<dbReference type="EMBL" id="BC070811">
    <property type="protein sequence ID" value="AAH70811.1"/>
    <property type="molecule type" value="mRNA"/>
</dbReference>
<dbReference type="RefSeq" id="NP_001084891.1">
    <property type="nucleotide sequence ID" value="NM_001091422.1"/>
</dbReference>
<dbReference type="SMR" id="Q6NRE4"/>
<dbReference type="DNASU" id="431942"/>
<dbReference type="GeneID" id="431942"/>
<dbReference type="KEGG" id="xla:431942"/>
<dbReference type="AGR" id="Xenbase:XB-GENE-976988"/>
<dbReference type="CTD" id="431942"/>
<dbReference type="Xenbase" id="XB-GENE-976988">
    <property type="gene designation" value="garem1.S"/>
</dbReference>
<dbReference type="OMA" id="CKNCANY"/>
<dbReference type="OrthoDB" id="6077228at2759"/>
<dbReference type="Proteomes" id="UP000186698">
    <property type="component" value="Chromosome 6S"/>
</dbReference>
<dbReference type="Bgee" id="431942">
    <property type="expression patterns" value="Expressed in heart and 19 other cell types or tissues"/>
</dbReference>
<dbReference type="GO" id="GO:0070064">
    <property type="term" value="F:proline-rich region binding"/>
    <property type="evidence" value="ECO:0000250"/>
    <property type="project" value="UniProtKB"/>
</dbReference>
<dbReference type="GO" id="GO:0071364">
    <property type="term" value="P:cellular response to epidermal growth factor stimulus"/>
    <property type="evidence" value="ECO:0000250"/>
    <property type="project" value="UniProtKB"/>
</dbReference>
<dbReference type="GO" id="GO:0007173">
    <property type="term" value="P:epidermal growth factor receptor signaling pathway"/>
    <property type="evidence" value="ECO:0000250"/>
    <property type="project" value="UniProtKB"/>
</dbReference>
<dbReference type="GO" id="GO:0051781">
    <property type="term" value="P:positive regulation of cell division"/>
    <property type="evidence" value="ECO:0007669"/>
    <property type="project" value="UniProtKB-KW"/>
</dbReference>
<dbReference type="GO" id="GO:0008284">
    <property type="term" value="P:positive regulation of cell population proliferation"/>
    <property type="evidence" value="ECO:0000250"/>
    <property type="project" value="UniProtKB"/>
</dbReference>
<dbReference type="GO" id="GO:0070374">
    <property type="term" value="P:positive regulation of ERK1 and ERK2 cascade"/>
    <property type="evidence" value="ECO:0000250"/>
    <property type="project" value="UniProtKB"/>
</dbReference>
<dbReference type="CDD" id="cd09525">
    <property type="entry name" value="SAM_GAREM"/>
    <property type="match status" value="1"/>
</dbReference>
<dbReference type="FunFam" id="1.10.150.50:FF:000042">
    <property type="entry name" value="GRB2-associated and regulator of MAPK protein 1"/>
    <property type="match status" value="1"/>
</dbReference>
<dbReference type="Gene3D" id="1.10.150.50">
    <property type="entry name" value="Transcription Factor, Ets-1"/>
    <property type="match status" value="1"/>
</dbReference>
<dbReference type="InterPro" id="IPR025946">
    <property type="entry name" value="CABIT_dom"/>
</dbReference>
<dbReference type="InterPro" id="IPR052281">
    <property type="entry name" value="GAREM"/>
</dbReference>
<dbReference type="InterPro" id="IPR013761">
    <property type="entry name" value="SAM/pointed_sf"/>
</dbReference>
<dbReference type="PANTHER" id="PTHR14454:SF6">
    <property type="entry name" value="GRB2-ASSOCIATED AND REGULATOR OF MAPK PROTEIN 1"/>
    <property type="match status" value="1"/>
</dbReference>
<dbReference type="PANTHER" id="PTHR14454">
    <property type="entry name" value="GRB2-ASSOCIATED AND REGULATOR OF MAPK PROTEIN FAMILY MEMBER"/>
    <property type="match status" value="1"/>
</dbReference>
<dbReference type="Pfam" id="PF12736">
    <property type="entry name" value="CABIT"/>
    <property type="match status" value="1"/>
</dbReference>
<dbReference type="SUPFAM" id="SSF47769">
    <property type="entry name" value="SAM/Pointed domain"/>
    <property type="match status" value="1"/>
</dbReference>
<gene>
    <name type="primary">garem1</name>
    <name type="synonym">fam59a</name>
    <name type="synonym">garem</name>
</gene>
<accession>Q6NRE4</accession>
<feature type="chain" id="PRO_0000277650" description="GRB2-associated and regulator of MAPK protein">
    <location>
        <begin position="1"/>
        <end position="876"/>
    </location>
</feature>
<feature type="domain" description="SAM">
    <location>
        <begin position="811"/>
        <end position="876"/>
    </location>
</feature>
<feature type="region of interest" description="CABIT">
    <location>
        <begin position="9"/>
        <end position="318"/>
    </location>
</feature>
<feature type="region of interest" description="Disordered" evidence="2">
    <location>
        <begin position="460"/>
        <end position="569"/>
    </location>
</feature>
<feature type="region of interest" description="Disordered" evidence="2">
    <location>
        <begin position="708"/>
        <end position="741"/>
    </location>
</feature>
<feature type="compositionally biased region" description="Polar residues" evidence="2">
    <location>
        <begin position="461"/>
        <end position="471"/>
    </location>
</feature>
<feature type="compositionally biased region" description="Pro residues" evidence="2">
    <location>
        <begin position="532"/>
        <end position="549"/>
    </location>
</feature>
<feature type="compositionally biased region" description="Polar residues" evidence="2">
    <location>
        <begin position="556"/>
        <end position="569"/>
    </location>
</feature>
<feature type="modified residue" description="Phosphotyrosine" evidence="1">
    <location>
        <position position="451"/>
    </location>
</feature>
<organism>
    <name type="scientific">Xenopus laevis</name>
    <name type="common">African clawed frog</name>
    <dbReference type="NCBI Taxonomy" id="8355"/>
    <lineage>
        <taxon>Eukaryota</taxon>
        <taxon>Metazoa</taxon>
        <taxon>Chordata</taxon>
        <taxon>Craniata</taxon>
        <taxon>Vertebrata</taxon>
        <taxon>Euteleostomi</taxon>
        <taxon>Amphibia</taxon>
        <taxon>Batrachia</taxon>
        <taxon>Anura</taxon>
        <taxon>Pipoidea</taxon>
        <taxon>Pipidae</taxon>
        <taxon>Xenopodinae</taxon>
        <taxon>Xenopus</taxon>
        <taxon>Xenopus</taxon>
    </lineage>
</organism>
<evidence type="ECO:0000250" key="1"/>
<evidence type="ECO:0000256" key="2">
    <source>
        <dbReference type="SAM" id="MobiDB-lite"/>
    </source>
</evidence>
<evidence type="ECO:0000305" key="3"/>
<sequence>MELPVPSLKDVKWSSASFPLDLLVSSYRLPQLVRVDCAGENVEGLRENDCLLIHSCRQWTTITAHSLEEGHYVIGPKIEIPVHYGGQFKLLEQDRDIKEPVQYFNSVEEVAKAFPERVYVMEEITFNVKVASGECNEDTEVYNITLCTGDELTLMGQAEILYAKTSKEKSRLNTIFKKIGKLNSISKLGKGKMPCLICMNHRTNESISLPFQCKGRFSTRSPLEIQMQEGEHTIRNIVEKTRLPVNVTVPSPPPRNSYDLHFIREGHRYKFVNIQTKTVVVCFALHTNKIVPMHFPLHLSVPKFSLPENLIKGEVWQDSVVQHWYNICQEQFDIEEYSRAVRDVKADWSEECKSPKKNWSAGHSHIPNSLSYARDELTQSFHRLSVCVYGNNLHGNSEVNLHGCRDLCGDWAAFPQDSPQYQDSCDSGSDYLFSETSEELTSLPAKPELPYEELWLEQGSVKRSGQPLTRSQSEKNKCDSFRGSLPSRCGTSSLPSPGALLTTKSLDVSLPPPPVPPKSEAVKEECRLLNAPPVPPRSSKPSSPTPSVPPAAENIVRQQTRSPSPTLSYYSSGLHSIGITESETTSSSDNSQVSCYPCNWMKNESSDLESNLTCGSASSEALPSRLSWPNRYCGGAEGLNVNDLPMDQCRSYYSYPRQKTPGTPKKNSPATFDFGGCGSFTGCNQGEFSDTVPGCPKSASYSLESATDRMLGDNSTKQSLSCPALPPRAPKPSEGNALSEPLSLPMKIDGAEEEIQTCSPDFLEEHYLAKKGVQDIFSISYPFSSPLHMQLAPRSCGDGSPWQPPTDLSGLSVEEVSKSLRFIGLSEDVVSFFVSEKIDGNLLVQLTEEILSEDFKLSKLQVKKLLQFINGWRPKM</sequence>
<keyword id="KW-0497">Mitogen</keyword>
<keyword id="KW-0597">Phosphoprotein</keyword>
<keyword id="KW-1185">Reference proteome</keyword>
<protein>
    <recommendedName>
        <fullName>GRB2-associated and regulator of MAPK protein</fullName>
    </recommendedName>
    <alternativeName>
        <fullName>GRB2-associated and regulator of MAPK1</fullName>
    </alternativeName>
</protein>
<reference key="1">
    <citation type="submission" date="2004-05" db="EMBL/GenBank/DDBJ databases">
        <authorList>
            <consortium name="NIH - Xenopus Gene Collection (XGC) project"/>
        </authorList>
    </citation>
    <scope>NUCLEOTIDE SEQUENCE [LARGE SCALE MRNA]</scope>
    <source>
        <tissue>Oocyte</tissue>
    </source>
</reference>
<proteinExistence type="evidence at transcript level"/>